<name>NO75_PEA</name>
<comment type="function">
    <text>Involved in early stages of root nodule development.</text>
</comment>
<comment type="tissue specificity">
    <text>Nodule parenchyma (inner cortex) of root nodules.</text>
</comment>
<comment type="similarity">
    <text evidence="2">Belongs to the nodulin 75 family.</text>
</comment>
<reference key="1">
    <citation type="journal article" date="1990" name="EMBO J.">
        <title>The early nodulin transcript ENOD2 is located in the nodule parenchyma (inner cortex) of pea and soybean root nodules.</title>
        <authorList>
            <person name="van de Wiel C."/>
            <person name="Scheres B."/>
            <person name="Franssen H."/>
            <person name="van Lierop M.-J."/>
            <person name="van Lammeren A."/>
            <person name="van Kammen A."/>
            <person name="Bisseling T."/>
        </authorList>
    </citation>
    <scope>NUCLEOTIDE SEQUENCE [MRNA]</scope>
    <source>
        <strain>cv. Sparkle</strain>
        <tissue>Root nodule</tissue>
    </source>
</reference>
<evidence type="ECO:0000256" key="1">
    <source>
        <dbReference type="SAM" id="MobiDB-lite"/>
    </source>
</evidence>
<evidence type="ECO:0000305" key="2"/>
<gene>
    <name type="primary">ENOD2</name>
</gene>
<dbReference type="EMBL" id="X51987">
    <property type="protein sequence ID" value="CAA36245.1"/>
    <property type="molecule type" value="mRNA"/>
</dbReference>
<dbReference type="PIR" id="S10101">
    <property type="entry name" value="S10101"/>
</dbReference>
<dbReference type="GO" id="GO:0009877">
    <property type="term" value="P:nodulation"/>
    <property type="evidence" value="ECO:0007669"/>
    <property type="project" value="UniProtKB-KW"/>
</dbReference>
<dbReference type="PRINTS" id="PR01217">
    <property type="entry name" value="PRICHEXTENSN"/>
</dbReference>
<organism>
    <name type="scientific">Pisum sativum</name>
    <name type="common">Garden pea</name>
    <name type="synonym">Lathyrus oleraceus</name>
    <dbReference type="NCBI Taxonomy" id="3888"/>
    <lineage>
        <taxon>Eukaryota</taxon>
        <taxon>Viridiplantae</taxon>
        <taxon>Streptophyta</taxon>
        <taxon>Embryophyta</taxon>
        <taxon>Tracheophyta</taxon>
        <taxon>Spermatophyta</taxon>
        <taxon>Magnoliopsida</taxon>
        <taxon>eudicotyledons</taxon>
        <taxon>Gunneridae</taxon>
        <taxon>Pentapetalae</taxon>
        <taxon>rosids</taxon>
        <taxon>fabids</taxon>
        <taxon>Fabales</taxon>
        <taxon>Fabaceae</taxon>
        <taxon>Papilionoideae</taxon>
        <taxon>50 kb inversion clade</taxon>
        <taxon>NPAAA clade</taxon>
        <taxon>Hologalegina</taxon>
        <taxon>IRL clade</taxon>
        <taxon>Fabeae</taxon>
        <taxon>Pisum</taxon>
    </lineage>
</organism>
<proteinExistence type="evidence at transcript level"/>
<protein>
    <recommendedName>
        <fullName>Early nodulin-75</fullName>
        <shortName>N-75</shortName>
    </recommendedName>
    <alternativeName>
        <fullName>NGM-75</fullName>
    </alternativeName>
</protein>
<keyword id="KW-0536">Nodulation</keyword>
<keyword id="KW-0677">Repeat</keyword>
<sequence>PPHEKPPHENTPPEYQPPHEKPPHEHPPPEYQPPHEKPPHEKPSPKYQPPHEHSPPEYQPPHEKPPHENPPPVYKPPYENSPPPHVYHRPLFQAPPPVKPSRPFGPFPAFKN</sequence>
<accession>P16329</accession>
<feature type="chain" id="PRO_0000213731" description="Early nodulin-75">
    <location>
        <begin position="1" status="less than"/>
        <end position="112"/>
    </location>
</feature>
<feature type="region of interest" description="Disordered" evidence="1">
    <location>
        <begin position="1"/>
        <end position="112"/>
    </location>
</feature>
<feature type="compositionally biased region" description="Basic and acidic residues" evidence="1">
    <location>
        <begin position="17"/>
        <end position="67"/>
    </location>
</feature>
<feature type="compositionally biased region" description="Pro residues" evidence="1">
    <location>
        <begin position="68"/>
        <end position="85"/>
    </location>
</feature>
<feature type="compositionally biased region" description="Pro residues" evidence="1">
    <location>
        <begin position="93"/>
        <end position="106"/>
    </location>
</feature>
<feature type="non-terminal residue">
    <location>
        <position position="1"/>
    </location>
</feature>